<comment type="function">
    <text evidence="1">Catalyzes the condensation of (S)-aspartate-beta-semialdehyde [(S)-ASA] and pyruvate to 4-hydroxy-tetrahydrodipicolinate (HTPA).</text>
</comment>
<comment type="catalytic activity">
    <reaction evidence="1">
        <text>L-aspartate 4-semialdehyde + pyruvate = (2S,4S)-4-hydroxy-2,3,4,5-tetrahydrodipicolinate + H2O + H(+)</text>
        <dbReference type="Rhea" id="RHEA:34171"/>
        <dbReference type="ChEBI" id="CHEBI:15361"/>
        <dbReference type="ChEBI" id="CHEBI:15377"/>
        <dbReference type="ChEBI" id="CHEBI:15378"/>
        <dbReference type="ChEBI" id="CHEBI:67139"/>
        <dbReference type="ChEBI" id="CHEBI:537519"/>
        <dbReference type="EC" id="4.3.3.7"/>
    </reaction>
</comment>
<comment type="pathway">
    <text evidence="1">Amino-acid biosynthesis; L-lysine biosynthesis via DAP pathway; (S)-tetrahydrodipicolinate from L-aspartate: step 3/4.</text>
</comment>
<comment type="subunit">
    <text evidence="1">Homotetramer; dimer of dimers.</text>
</comment>
<comment type="subcellular location">
    <subcellularLocation>
        <location evidence="1">Cytoplasm</location>
    </subcellularLocation>
</comment>
<comment type="similarity">
    <text evidence="1">Belongs to the DapA family.</text>
</comment>
<comment type="caution">
    <text evidence="2">Was originally thought to be a dihydrodipicolinate synthase (DHDPS), catalyzing the condensation of (S)-aspartate-beta-semialdehyde [(S)-ASA] and pyruvate to dihydrodipicolinate (DHDP). However, it was shown in E.coli that the product of the enzymatic reaction is not dihydrodipicolinate but in fact (4S)-4-hydroxy-2,3,4,5-tetrahydro-(2S)-dipicolinic acid (HTPA), and that the consecutive dehydration reaction leading to DHDP is not spontaneous but catalyzed by DapB.</text>
</comment>
<name>DAPA_THENN</name>
<organism>
    <name type="scientific">Thermotoga neapolitana (strain ATCC 49049 / DSM 4359 / NBRC 107923 / NS-E)</name>
    <dbReference type="NCBI Taxonomy" id="309803"/>
    <lineage>
        <taxon>Bacteria</taxon>
        <taxon>Thermotogati</taxon>
        <taxon>Thermotogota</taxon>
        <taxon>Thermotogae</taxon>
        <taxon>Thermotogales</taxon>
        <taxon>Thermotogaceae</taxon>
        <taxon>Thermotoga</taxon>
    </lineage>
</organism>
<feature type="chain" id="PRO_1000134884" description="4-hydroxy-tetrahydrodipicolinate synthase">
    <location>
        <begin position="1"/>
        <end position="294"/>
    </location>
</feature>
<feature type="active site" description="Proton donor/acceptor" evidence="1">
    <location>
        <position position="132"/>
    </location>
</feature>
<feature type="active site" description="Schiff-base intermediate with substrate" evidence="1">
    <location>
        <position position="161"/>
    </location>
</feature>
<feature type="binding site" evidence="1">
    <location>
        <position position="44"/>
    </location>
    <ligand>
        <name>pyruvate</name>
        <dbReference type="ChEBI" id="CHEBI:15361"/>
    </ligand>
</feature>
<feature type="binding site" evidence="1">
    <location>
        <position position="206"/>
    </location>
    <ligand>
        <name>pyruvate</name>
        <dbReference type="ChEBI" id="CHEBI:15361"/>
    </ligand>
</feature>
<feature type="site" description="Part of a proton relay during catalysis" evidence="1">
    <location>
        <position position="43"/>
    </location>
</feature>
<feature type="site" description="Part of a proton relay during catalysis" evidence="1">
    <location>
        <position position="106"/>
    </location>
</feature>
<reference key="1">
    <citation type="submission" date="2007-11" db="EMBL/GenBank/DDBJ databases">
        <title>The genome sequence of the hyperthermophilic bacterium Thermotoga neapolitana.</title>
        <authorList>
            <person name="Lim S.K."/>
            <person name="Kim J.S."/>
            <person name="Cha S.H."/>
            <person name="Park B.C."/>
            <person name="Lee D.S."/>
            <person name="Tae H.S."/>
            <person name="Kim S.-J."/>
            <person name="Kim J.J."/>
            <person name="Park K.J."/>
            <person name="Lee S.Y."/>
        </authorList>
    </citation>
    <scope>NUCLEOTIDE SEQUENCE [LARGE SCALE GENOMIC DNA]</scope>
    <source>
        <strain>ATCC 49049 / DSM 4359 / NBRC 107923 / NS-E</strain>
    </source>
</reference>
<sequence>MFRGVGTAIVTPFKNGELDLEAYERLVRYQLDGGVSALIVLGTTGEAPTVNDDERERLVSKTLEIVDGKIPVIVGAGTNSTEKTLKLVKQAEKLGADGVLIVTPYYNKPTQEGLYQHYKYISERTDLKIIVYNVPGRTGVNVLPETAARIASDLKNVVGIKEANGDIDQIDRTVTLTKSARSDFMVWSGNDDRTFYLLCAGGDGVISVVSNVAPKQMSDLCAEFFSGNIEKAREIHRKLRPLMKALFVETNPIPVKAALSLMGYVENELRLPLVPASEKTVELLKGVLRESGLL</sequence>
<proteinExistence type="inferred from homology"/>
<keyword id="KW-0028">Amino-acid biosynthesis</keyword>
<keyword id="KW-0963">Cytoplasm</keyword>
<keyword id="KW-0220">Diaminopimelate biosynthesis</keyword>
<keyword id="KW-0456">Lyase</keyword>
<keyword id="KW-0457">Lysine biosynthesis</keyword>
<keyword id="KW-0704">Schiff base</keyword>
<gene>
    <name evidence="1" type="primary">dapA</name>
    <name type="ordered locus">CTN_0972</name>
</gene>
<evidence type="ECO:0000255" key="1">
    <source>
        <dbReference type="HAMAP-Rule" id="MF_00418"/>
    </source>
</evidence>
<evidence type="ECO:0000305" key="2"/>
<protein>
    <recommendedName>
        <fullName evidence="1">4-hydroxy-tetrahydrodipicolinate synthase</fullName>
        <shortName evidence="1">HTPA synthase</shortName>
        <ecNumber evidence="1">4.3.3.7</ecNumber>
    </recommendedName>
</protein>
<dbReference type="EC" id="4.3.3.7" evidence="1"/>
<dbReference type="EMBL" id="CP000916">
    <property type="protein sequence ID" value="ACM23148.1"/>
    <property type="molecule type" value="Genomic_DNA"/>
</dbReference>
<dbReference type="RefSeq" id="WP_015919465.1">
    <property type="nucleotide sequence ID" value="NC_011978.1"/>
</dbReference>
<dbReference type="SMR" id="B9K865"/>
<dbReference type="STRING" id="309803.CTN_0972"/>
<dbReference type="KEGG" id="tna:CTN_0972"/>
<dbReference type="eggNOG" id="COG0329">
    <property type="taxonomic scope" value="Bacteria"/>
</dbReference>
<dbReference type="HOGENOM" id="CLU_049343_7_0_0"/>
<dbReference type="UniPathway" id="UPA00034">
    <property type="reaction ID" value="UER00017"/>
</dbReference>
<dbReference type="Proteomes" id="UP000000445">
    <property type="component" value="Chromosome"/>
</dbReference>
<dbReference type="GO" id="GO:0005829">
    <property type="term" value="C:cytosol"/>
    <property type="evidence" value="ECO:0007669"/>
    <property type="project" value="TreeGrafter"/>
</dbReference>
<dbReference type="GO" id="GO:0008840">
    <property type="term" value="F:4-hydroxy-tetrahydrodipicolinate synthase activity"/>
    <property type="evidence" value="ECO:0007669"/>
    <property type="project" value="UniProtKB-UniRule"/>
</dbReference>
<dbReference type="GO" id="GO:0019877">
    <property type="term" value="P:diaminopimelate biosynthetic process"/>
    <property type="evidence" value="ECO:0007669"/>
    <property type="project" value="UniProtKB-UniRule"/>
</dbReference>
<dbReference type="GO" id="GO:0009089">
    <property type="term" value="P:lysine biosynthetic process via diaminopimelate"/>
    <property type="evidence" value="ECO:0007669"/>
    <property type="project" value="UniProtKB-UniRule"/>
</dbReference>
<dbReference type="CDD" id="cd00950">
    <property type="entry name" value="DHDPS"/>
    <property type="match status" value="1"/>
</dbReference>
<dbReference type="Gene3D" id="3.20.20.70">
    <property type="entry name" value="Aldolase class I"/>
    <property type="match status" value="1"/>
</dbReference>
<dbReference type="HAMAP" id="MF_00418">
    <property type="entry name" value="DapA"/>
    <property type="match status" value="1"/>
</dbReference>
<dbReference type="InterPro" id="IPR013785">
    <property type="entry name" value="Aldolase_TIM"/>
</dbReference>
<dbReference type="InterPro" id="IPR005263">
    <property type="entry name" value="DapA"/>
</dbReference>
<dbReference type="InterPro" id="IPR002220">
    <property type="entry name" value="DapA-like"/>
</dbReference>
<dbReference type="InterPro" id="IPR020625">
    <property type="entry name" value="Schiff_base-form_aldolases_AS"/>
</dbReference>
<dbReference type="InterPro" id="IPR020624">
    <property type="entry name" value="Schiff_base-form_aldolases_CS"/>
</dbReference>
<dbReference type="NCBIfam" id="TIGR00674">
    <property type="entry name" value="dapA"/>
    <property type="match status" value="1"/>
</dbReference>
<dbReference type="PANTHER" id="PTHR12128:SF66">
    <property type="entry name" value="4-HYDROXY-2-OXOGLUTARATE ALDOLASE, MITOCHONDRIAL"/>
    <property type="match status" value="1"/>
</dbReference>
<dbReference type="PANTHER" id="PTHR12128">
    <property type="entry name" value="DIHYDRODIPICOLINATE SYNTHASE"/>
    <property type="match status" value="1"/>
</dbReference>
<dbReference type="Pfam" id="PF00701">
    <property type="entry name" value="DHDPS"/>
    <property type="match status" value="1"/>
</dbReference>
<dbReference type="PIRSF" id="PIRSF001365">
    <property type="entry name" value="DHDPS"/>
    <property type="match status" value="1"/>
</dbReference>
<dbReference type="PRINTS" id="PR00146">
    <property type="entry name" value="DHPICSNTHASE"/>
</dbReference>
<dbReference type="SMART" id="SM01130">
    <property type="entry name" value="DHDPS"/>
    <property type="match status" value="1"/>
</dbReference>
<dbReference type="SUPFAM" id="SSF51569">
    <property type="entry name" value="Aldolase"/>
    <property type="match status" value="1"/>
</dbReference>
<dbReference type="PROSITE" id="PS00665">
    <property type="entry name" value="DHDPS_1"/>
    <property type="match status" value="1"/>
</dbReference>
<dbReference type="PROSITE" id="PS00666">
    <property type="entry name" value="DHDPS_2"/>
    <property type="match status" value="1"/>
</dbReference>
<accession>B9K865</accession>